<sequence length="240" mass="27272">MADDWESAADSEIILQNAASTVNKWEGEDDDDDVKESWEDEEEKKDEENEKPTITDVPVKTKPSKALKAKLEEQARLEEEKEAKRLASLTPEEKLAEKLRLQKIQEDSDLNHALDTFGVTRAETNGNGLDSFNPETKEQFKEFGSALSWKVGQYRESAEFPQFVEDLVRGLCIHLSAADIKKVKMSVEILHSEKLKMEKAIAKKAAGKNKGKATLRTESDDIDDYKKYGNDFSEDYDDFM</sequence>
<reference key="1">
    <citation type="journal article" date="2007" name="Nature">
        <title>Evolution of genes and genomes on the Drosophila phylogeny.</title>
        <authorList>
            <consortium name="Drosophila 12 genomes consortium"/>
        </authorList>
    </citation>
    <scope>NUCLEOTIDE SEQUENCE [LARGE SCALE GENOMIC DNA]</scope>
    <source>
        <strain>MSH-3 / Tucson 14011-0111.49</strain>
    </source>
</reference>
<organism>
    <name type="scientific">Drosophila persimilis</name>
    <name type="common">Fruit fly</name>
    <dbReference type="NCBI Taxonomy" id="7234"/>
    <lineage>
        <taxon>Eukaryota</taxon>
        <taxon>Metazoa</taxon>
        <taxon>Ecdysozoa</taxon>
        <taxon>Arthropoda</taxon>
        <taxon>Hexapoda</taxon>
        <taxon>Insecta</taxon>
        <taxon>Pterygota</taxon>
        <taxon>Neoptera</taxon>
        <taxon>Endopterygota</taxon>
        <taxon>Diptera</taxon>
        <taxon>Brachycera</taxon>
        <taxon>Muscomorpha</taxon>
        <taxon>Ephydroidea</taxon>
        <taxon>Drosophilidae</taxon>
        <taxon>Drosophila</taxon>
        <taxon>Sophophora</taxon>
    </lineage>
</organism>
<proteinExistence type="inferred from homology"/>
<protein>
    <recommendedName>
        <fullName evidence="1">Eukaryotic translation initiation factor 3 subunit J</fullName>
        <shortName evidence="1">eIF3j</shortName>
    </recommendedName>
</protein>
<name>EIF3J_DROPE</name>
<accession>B4GIF2</accession>
<comment type="function">
    <text evidence="1">Component of the eukaryotic translation initiation factor 3 (eIF-3) complex, which is involved in protein synthesis of a specialized repertoire of mRNAs and, together with other initiation factors, stimulates binding of mRNA and methionyl-tRNAi to the 40S ribosome. The eIF-3 complex specifically targets and initiates translation of a subset of mRNAs involved in cell proliferation.</text>
</comment>
<comment type="subunit">
    <text evidence="1">Component of the eukaryotic translation initiation factor 3 (eIF-3) complex. The eIF-3 complex interacts with pix.</text>
</comment>
<comment type="subcellular location">
    <subcellularLocation>
        <location evidence="1">Cytoplasm</location>
    </subcellularLocation>
</comment>
<comment type="similarity">
    <text evidence="1">Belongs to the eIF-3 subunit J family.</text>
</comment>
<evidence type="ECO:0000255" key="1">
    <source>
        <dbReference type="HAMAP-Rule" id="MF_03009"/>
    </source>
</evidence>
<evidence type="ECO:0000256" key="2">
    <source>
        <dbReference type="SAM" id="MobiDB-lite"/>
    </source>
</evidence>
<gene>
    <name evidence="1" type="primary">eIF3j</name>
    <name evidence="1" type="synonym">Adam</name>
    <name type="ORF">GL16765</name>
</gene>
<keyword id="KW-0963">Cytoplasm</keyword>
<keyword id="KW-0396">Initiation factor</keyword>
<keyword id="KW-0648">Protein biosynthesis</keyword>
<keyword id="KW-1185">Reference proteome</keyword>
<dbReference type="EMBL" id="CH479183">
    <property type="protein sequence ID" value="EDW36272.1"/>
    <property type="molecule type" value="Genomic_DNA"/>
</dbReference>
<dbReference type="SMR" id="B4GIF2"/>
<dbReference type="STRING" id="7234.B4GIF2"/>
<dbReference type="EnsemblMetazoa" id="FBtr0182380">
    <property type="protein sequence ID" value="FBpp0180872"/>
    <property type="gene ID" value="FBgn0154369"/>
</dbReference>
<dbReference type="EnsemblMetazoa" id="XM_002018397.2">
    <property type="protein sequence ID" value="XP_002018433.1"/>
    <property type="gene ID" value="LOC6592782"/>
</dbReference>
<dbReference type="GeneID" id="6592782"/>
<dbReference type="KEGG" id="dpe:6592782"/>
<dbReference type="CTD" id="8669"/>
<dbReference type="eggNOG" id="KOG4813">
    <property type="taxonomic scope" value="Eukaryota"/>
</dbReference>
<dbReference type="HOGENOM" id="CLU_085806_2_0_1"/>
<dbReference type="OMA" id="KPHYALW"/>
<dbReference type="OrthoDB" id="20381at2759"/>
<dbReference type="PhylomeDB" id="B4GIF2"/>
<dbReference type="ChiTaRS" id="Adam">
    <property type="organism name" value="fly"/>
</dbReference>
<dbReference type="Proteomes" id="UP000008744">
    <property type="component" value="Unassembled WGS sequence"/>
</dbReference>
<dbReference type="GO" id="GO:0016282">
    <property type="term" value="C:eukaryotic 43S preinitiation complex"/>
    <property type="evidence" value="ECO:0007669"/>
    <property type="project" value="UniProtKB-UniRule"/>
</dbReference>
<dbReference type="GO" id="GO:0033290">
    <property type="term" value="C:eukaryotic 48S preinitiation complex"/>
    <property type="evidence" value="ECO:0007669"/>
    <property type="project" value="UniProtKB-UniRule"/>
</dbReference>
<dbReference type="GO" id="GO:0005852">
    <property type="term" value="C:eukaryotic translation initiation factor 3 complex"/>
    <property type="evidence" value="ECO:0007669"/>
    <property type="project" value="UniProtKB-UniRule"/>
</dbReference>
<dbReference type="GO" id="GO:0003743">
    <property type="term" value="F:translation initiation factor activity"/>
    <property type="evidence" value="ECO:0007669"/>
    <property type="project" value="UniProtKB-UniRule"/>
</dbReference>
<dbReference type="GO" id="GO:0001732">
    <property type="term" value="P:formation of cytoplasmic translation initiation complex"/>
    <property type="evidence" value="ECO:0007669"/>
    <property type="project" value="UniProtKB-UniRule"/>
</dbReference>
<dbReference type="GO" id="GO:0006446">
    <property type="term" value="P:regulation of translational initiation"/>
    <property type="evidence" value="ECO:0007669"/>
    <property type="project" value="EnsemblMetazoa"/>
</dbReference>
<dbReference type="Gene3D" id="1.10.246.60">
    <property type="entry name" value="Eukaryotic translation initiation factor 3 like domains"/>
    <property type="match status" value="1"/>
</dbReference>
<dbReference type="HAMAP" id="MF_03009">
    <property type="entry name" value="eIF3j"/>
    <property type="match status" value="1"/>
</dbReference>
<dbReference type="InterPro" id="IPR023194">
    <property type="entry name" value="eIF3-like_dom_sf"/>
</dbReference>
<dbReference type="InterPro" id="IPR013906">
    <property type="entry name" value="eIF3j"/>
</dbReference>
<dbReference type="PANTHER" id="PTHR21681">
    <property type="entry name" value="EUKARYOTIC TRANSLATION INITIATION FACTOR 3 SUBUNIT J"/>
    <property type="match status" value="1"/>
</dbReference>
<dbReference type="PANTHER" id="PTHR21681:SF0">
    <property type="entry name" value="EUKARYOTIC TRANSLATION INITIATION FACTOR 3 SUBUNIT J"/>
    <property type="match status" value="1"/>
</dbReference>
<dbReference type="Pfam" id="PF08597">
    <property type="entry name" value="eIF3_subunit"/>
    <property type="match status" value="1"/>
</dbReference>
<feature type="chain" id="PRO_0000365137" description="Eukaryotic translation initiation factor 3 subunit J">
    <location>
        <begin position="1"/>
        <end position="240"/>
    </location>
</feature>
<feature type="region of interest" description="Disordered" evidence="2">
    <location>
        <begin position="1"/>
        <end position="66"/>
    </location>
</feature>
<feature type="compositionally biased region" description="Acidic residues" evidence="2">
    <location>
        <begin position="27"/>
        <end position="45"/>
    </location>
</feature>